<accession>A4Y9F2</accession>
<evidence type="ECO:0000255" key="1">
    <source>
        <dbReference type="HAMAP-Rule" id="MF_00244"/>
    </source>
</evidence>
<dbReference type="EC" id="2.7.7.18" evidence="1"/>
<dbReference type="EMBL" id="CP000681">
    <property type="protein sequence ID" value="ABP76585.1"/>
    <property type="molecule type" value="Genomic_DNA"/>
</dbReference>
<dbReference type="SMR" id="A4Y9F2"/>
<dbReference type="STRING" id="319224.Sputcn32_2866"/>
<dbReference type="KEGG" id="spc:Sputcn32_2866"/>
<dbReference type="eggNOG" id="COG1057">
    <property type="taxonomic scope" value="Bacteria"/>
</dbReference>
<dbReference type="HOGENOM" id="CLU_069765_0_0_6"/>
<dbReference type="UniPathway" id="UPA00253">
    <property type="reaction ID" value="UER00332"/>
</dbReference>
<dbReference type="GO" id="GO:0005524">
    <property type="term" value="F:ATP binding"/>
    <property type="evidence" value="ECO:0007669"/>
    <property type="project" value="UniProtKB-KW"/>
</dbReference>
<dbReference type="GO" id="GO:0004515">
    <property type="term" value="F:nicotinate-nucleotide adenylyltransferase activity"/>
    <property type="evidence" value="ECO:0007669"/>
    <property type="project" value="UniProtKB-UniRule"/>
</dbReference>
<dbReference type="GO" id="GO:0009435">
    <property type="term" value="P:NAD biosynthetic process"/>
    <property type="evidence" value="ECO:0007669"/>
    <property type="project" value="UniProtKB-UniRule"/>
</dbReference>
<dbReference type="CDD" id="cd02165">
    <property type="entry name" value="NMNAT"/>
    <property type="match status" value="1"/>
</dbReference>
<dbReference type="FunFam" id="3.40.50.620:FF:000039">
    <property type="entry name" value="Probable nicotinate-nucleotide adenylyltransferase"/>
    <property type="match status" value="1"/>
</dbReference>
<dbReference type="Gene3D" id="3.40.50.620">
    <property type="entry name" value="HUPs"/>
    <property type="match status" value="1"/>
</dbReference>
<dbReference type="HAMAP" id="MF_00244">
    <property type="entry name" value="NaMN_adenylyltr"/>
    <property type="match status" value="1"/>
</dbReference>
<dbReference type="InterPro" id="IPR004821">
    <property type="entry name" value="Cyt_trans-like"/>
</dbReference>
<dbReference type="InterPro" id="IPR005248">
    <property type="entry name" value="NadD/NMNAT"/>
</dbReference>
<dbReference type="InterPro" id="IPR014729">
    <property type="entry name" value="Rossmann-like_a/b/a_fold"/>
</dbReference>
<dbReference type="NCBIfam" id="TIGR00125">
    <property type="entry name" value="cyt_tran_rel"/>
    <property type="match status" value="1"/>
</dbReference>
<dbReference type="NCBIfam" id="TIGR00482">
    <property type="entry name" value="nicotinate (nicotinamide) nucleotide adenylyltransferase"/>
    <property type="match status" value="1"/>
</dbReference>
<dbReference type="NCBIfam" id="NF000839">
    <property type="entry name" value="PRK00071.1-1"/>
    <property type="match status" value="1"/>
</dbReference>
<dbReference type="NCBIfam" id="NF000840">
    <property type="entry name" value="PRK00071.1-3"/>
    <property type="match status" value="1"/>
</dbReference>
<dbReference type="PANTHER" id="PTHR39321">
    <property type="entry name" value="NICOTINATE-NUCLEOTIDE ADENYLYLTRANSFERASE-RELATED"/>
    <property type="match status" value="1"/>
</dbReference>
<dbReference type="PANTHER" id="PTHR39321:SF3">
    <property type="entry name" value="PHOSPHOPANTETHEINE ADENYLYLTRANSFERASE"/>
    <property type="match status" value="1"/>
</dbReference>
<dbReference type="Pfam" id="PF01467">
    <property type="entry name" value="CTP_transf_like"/>
    <property type="match status" value="1"/>
</dbReference>
<dbReference type="SUPFAM" id="SSF52374">
    <property type="entry name" value="Nucleotidylyl transferase"/>
    <property type="match status" value="1"/>
</dbReference>
<reference key="1">
    <citation type="submission" date="2007-04" db="EMBL/GenBank/DDBJ databases">
        <title>Complete sequence of Shewanella putrefaciens CN-32.</title>
        <authorList>
            <consortium name="US DOE Joint Genome Institute"/>
            <person name="Copeland A."/>
            <person name="Lucas S."/>
            <person name="Lapidus A."/>
            <person name="Barry K."/>
            <person name="Detter J.C."/>
            <person name="Glavina del Rio T."/>
            <person name="Hammon N."/>
            <person name="Israni S."/>
            <person name="Dalin E."/>
            <person name="Tice H."/>
            <person name="Pitluck S."/>
            <person name="Chain P."/>
            <person name="Malfatti S."/>
            <person name="Shin M."/>
            <person name="Vergez L."/>
            <person name="Schmutz J."/>
            <person name="Larimer F."/>
            <person name="Land M."/>
            <person name="Hauser L."/>
            <person name="Kyrpides N."/>
            <person name="Mikhailova N."/>
            <person name="Romine M.F."/>
            <person name="Fredrickson J."/>
            <person name="Tiedje J."/>
            <person name="Richardson P."/>
        </authorList>
    </citation>
    <scope>NUCLEOTIDE SEQUENCE [LARGE SCALE GENOMIC DNA]</scope>
    <source>
        <strain>CN-32 / ATCC BAA-453</strain>
    </source>
</reference>
<sequence length="215" mass="24287">MRIGILGGTFDPIHYGHIRPAIEVKEALGLDKVLLMPNHIPPHKHQPNLSTAQRLKMVADVCAELAGFELCDIEANRDTPSYTVVTLEQLSTQYPNAELFFIMGMDSFIHLQSWHKWQQIFGFANLVLCQRPGWHLSNEHPMQQVLMARSAAIDTLKNPPQKHHPIHGRIFTVDITPQDISSTQIRSALAIGKIPTDALMPVTLNYIQKQQLYLS</sequence>
<comment type="function">
    <text evidence="1">Catalyzes the reversible adenylation of nicotinate mononucleotide (NaMN) to nicotinic acid adenine dinucleotide (NaAD).</text>
</comment>
<comment type="catalytic activity">
    <reaction evidence="1">
        <text>nicotinate beta-D-ribonucleotide + ATP + H(+) = deamido-NAD(+) + diphosphate</text>
        <dbReference type="Rhea" id="RHEA:22860"/>
        <dbReference type="ChEBI" id="CHEBI:15378"/>
        <dbReference type="ChEBI" id="CHEBI:30616"/>
        <dbReference type="ChEBI" id="CHEBI:33019"/>
        <dbReference type="ChEBI" id="CHEBI:57502"/>
        <dbReference type="ChEBI" id="CHEBI:58437"/>
        <dbReference type="EC" id="2.7.7.18"/>
    </reaction>
</comment>
<comment type="pathway">
    <text evidence="1">Cofactor biosynthesis; NAD(+) biosynthesis; deamido-NAD(+) from nicotinate D-ribonucleotide: step 1/1.</text>
</comment>
<comment type="similarity">
    <text evidence="1">Belongs to the NadD family.</text>
</comment>
<feature type="chain" id="PRO_1000044690" description="Probable nicotinate-nucleotide adenylyltransferase">
    <location>
        <begin position="1"/>
        <end position="215"/>
    </location>
</feature>
<protein>
    <recommendedName>
        <fullName evidence="1">Probable nicotinate-nucleotide adenylyltransferase</fullName>
        <ecNumber evidence="1">2.7.7.18</ecNumber>
    </recommendedName>
    <alternativeName>
        <fullName evidence="1">Deamido-NAD(+) diphosphorylase</fullName>
    </alternativeName>
    <alternativeName>
        <fullName evidence="1">Deamido-NAD(+) pyrophosphorylase</fullName>
    </alternativeName>
    <alternativeName>
        <fullName evidence="1">Nicotinate mononucleotide adenylyltransferase</fullName>
        <shortName evidence="1">NaMN adenylyltransferase</shortName>
    </alternativeName>
</protein>
<organism>
    <name type="scientific">Shewanella putrefaciens (strain CN-32 / ATCC BAA-453)</name>
    <dbReference type="NCBI Taxonomy" id="319224"/>
    <lineage>
        <taxon>Bacteria</taxon>
        <taxon>Pseudomonadati</taxon>
        <taxon>Pseudomonadota</taxon>
        <taxon>Gammaproteobacteria</taxon>
        <taxon>Alteromonadales</taxon>
        <taxon>Shewanellaceae</taxon>
        <taxon>Shewanella</taxon>
    </lineage>
</organism>
<name>NADD_SHEPC</name>
<keyword id="KW-0067">ATP-binding</keyword>
<keyword id="KW-0520">NAD</keyword>
<keyword id="KW-0547">Nucleotide-binding</keyword>
<keyword id="KW-0548">Nucleotidyltransferase</keyword>
<keyword id="KW-0662">Pyridine nucleotide biosynthesis</keyword>
<keyword id="KW-0808">Transferase</keyword>
<gene>
    <name evidence="1" type="primary">nadD</name>
    <name type="ordered locus">Sputcn32_2866</name>
</gene>
<proteinExistence type="inferred from homology"/>